<feature type="chain" id="PRO_0000362705" description="NADH-quinone oxidoreductase subunit A">
    <location>
        <begin position="1"/>
        <end position="130"/>
    </location>
</feature>
<feature type="transmembrane region" description="Helical" evidence="1">
    <location>
        <begin position="17"/>
        <end position="37"/>
    </location>
</feature>
<feature type="transmembrane region" description="Helical" evidence="1">
    <location>
        <begin position="74"/>
        <end position="94"/>
    </location>
</feature>
<feature type="transmembrane region" description="Helical" evidence="1">
    <location>
        <begin position="99"/>
        <end position="119"/>
    </location>
</feature>
<evidence type="ECO:0000255" key="1">
    <source>
        <dbReference type="HAMAP-Rule" id="MF_01394"/>
    </source>
</evidence>
<evidence type="ECO:0000305" key="2"/>
<organism>
    <name type="scientific">Neorickettsia sennetsu (strain ATCC VR-367 / Miyayama)</name>
    <name type="common">Ehrlichia sennetsu</name>
    <dbReference type="NCBI Taxonomy" id="222891"/>
    <lineage>
        <taxon>Bacteria</taxon>
        <taxon>Pseudomonadati</taxon>
        <taxon>Pseudomonadota</taxon>
        <taxon>Alphaproteobacteria</taxon>
        <taxon>Rickettsiales</taxon>
        <taxon>Anaplasmataceae</taxon>
        <taxon>Neorickettsia</taxon>
    </lineage>
</organism>
<comment type="function">
    <text evidence="1">NDH-1 shuttles electrons from NADH, via FMN and iron-sulfur (Fe-S) centers, to quinones in the respiratory chain. The immediate electron acceptor for the enzyme in this species is believed to be ubiquinone. Couples the redox reaction to proton translocation (for every two electrons transferred, four hydrogen ions are translocated across the cytoplasmic membrane), and thus conserves the redox energy in a proton gradient.</text>
</comment>
<comment type="catalytic activity">
    <reaction evidence="1">
        <text>a quinone + NADH + 5 H(+)(in) = a quinol + NAD(+) + 4 H(+)(out)</text>
        <dbReference type="Rhea" id="RHEA:57888"/>
        <dbReference type="ChEBI" id="CHEBI:15378"/>
        <dbReference type="ChEBI" id="CHEBI:24646"/>
        <dbReference type="ChEBI" id="CHEBI:57540"/>
        <dbReference type="ChEBI" id="CHEBI:57945"/>
        <dbReference type="ChEBI" id="CHEBI:132124"/>
    </reaction>
</comment>
<comment type="subunit">
    <text evidence="1">NDH-1 is composed of 14 different subunits. Subunits NuoA, H, J, K, L, M, N constitute the membrane sector of the complex.</text>
</comment>
<comment type="subcellular location">
    <subcellularLocation>
        <location evidence="1">Cell inner membrane</location>
        <topology evidence="1">Multi-pass membrane protein</topology>
    </subcellularLocation>
</comment>
<comment type="similarity">
    <text evidence="1">Belongs to the complex I subunit 3 family.</text>
</comment>
<comment type="sequence caution" evidence="2">
    <conflict type="erroneous initiation">
        <sequence resource="EMBL-CDS" id="ABD45956"/>
    </conflict>
</comment>
<accession>Q2GDY1</accession>
<protein>
    <recommendedName>
        <fullName evidence="1">NADH-quinone oxidoreductase subunit A</fullName>
        <ecNumber evidence="1">7.1.1.-</ecNumber>
    </recommendedName>
    <alternativeName>
        <fullName evidence="1">NADH dehydrogenase I subunit A</fullName>
    </alternativeName>
    <alternativeName>
        <fullName evidence="1">NDH-1 subunit A</fullName>
    </alternativeName>
    <alternativeName>
        <fullName evidence="1">NUO1</fullName>
    </alternativeName>
</protein>
<reference key="1">
    <citation type="journal article" date="2006" name="PLoS Genet.">
        <title>Comparative genomics of emerging human ehrlichiosis agents.</title>
        <authorList>
            <person name="Dunning Hotopp J.C."/>
            <person name="Lin M."/>
            <person name="Madupu R."/>
            <person name="Crabtree J."/>
            <person name="Angiuoli S.V."/>
            <person name="Eisen J.A."/>
            <person name="Seshadri R."/>
            <person name="Ren Q."/>
            <person name="Wu M."/>
            <person name="Utterback T.R."/>
            <person name="Smith S."/>
            <person name="Lewis M."/>
            <person name="Khouri H."/>
            <person name="Zhang C."/>
            <person name="Niu H."/>
            <person name="Lin Q."/>
            <person name="Ohashi N."/>
            <person name="Zhi N."/>
            <person name="Nelson W.C."/>
            <person name="Brinkac L.M."/>
            <person name="Dodson R.J."/>
            <person name="Rosovitz M.J."/>
            <person name="Sundaram J.P."/>
            <person name="Daugherty S.C."/>
            <person name="Davidsen T."/>
            <person name="Durkin A.S."/>
            <person name="Gwinn M.L."/>
            <person name="Haft D.H."/>
            <person name="Selengut J.D."/>
            <person name="Sullivan S.A."/>
            <person name="Zafar N."/>
            <person name="Zhou L."/>
            <person name="Benahmed F."/>
            <person name="Forberger H."/>
            <person name="Halpin R."/>
            <person name="Mulligan S."/>
            <person name="Robinson J."/>
            <person name="White O."/>
            <person name="Rikihisa Y."/>
            <person name="Tettelin H."/>
        </authorList>
    </citation>
    <scope>NUCLEOTIDE SEQUENCE [LARGE SCALE GENOMIC DNA]</scope>
    <source>
        <strain>ATCC VR-367 / Miyayama</strain>
    </source>
</reference>
<proteinExistence type="inferred from homology"/>
<sequence length="130" mass="14633">MLESSVVGIGKWVVEDYIFVGLFFVVACFISCVMLALPVFIAPSSHERHKGDSYECGFDKLSSTGERFNVRFYLVGILFIIFDLEIIFLFPWAVSARELGPAAFVSVLIFLIILTVGFVYEFVSGALDWR</sequence>
<keyword id="KW-0997">Cell inner membrane</keyword>
<keyword id="KW-1003">Cell membrane</keyword>
<keyword id="KW-0472">Membrane</keyword>
<keyword id="KW-0520">NAD</keyword>
<keyword id="KW-0874">Quinone</keyword>
<keyword id="KW-1278">Translocase</keyword>
<keyword id="KW-0812">Transmembrane</keyword>
<keyword id="KW-1133">Transmembrane helix</keyword>
<keyword id="KW-0813">Transport</keyword>
<keyword id="KW-0830">Ubiquinone</keyword>
<name>NUOA_NEOSM</name>
<dbReference type="EC" id="7.1.1.-" evidence="1"/>
<dbReference type="EMBL" id="CP000237">
    <property type="protein sequence ID" value="ABD45956.1"/>
    <property type="status" value="ALT_INIT"/>
    <property type="molecule type" value="Genomic_DNA"/>
</dbReference>
<dbReference type="RefSeq" id="WP_041917496.1">
    <property type="nucleotide sequence ID" value="NC_007798.1"/>
</dbReference>
<dbReference type="SMR" id="Q2GDY1"/>
<dbReference type="STRING" id="222891.NSE_0429"/>
<dbReference type="KEGG" id="nse:NSE_0429"/>
<dbReference type="eggNOG" id="COG0838">
    <property type="taxonomic scope" value="Bacteria"/>
</dbReference>
<dbReference type="HOGENOM" id="CLU_119549_0_2_5"/>
<dbReference type="Proteomes" id="UP000001942">
    <property type="component" value="Chromosome"/>
</dbReference>
<dbReference type="GO" id="GO:0030964">
    <property type="term" value="C:NADH dehydrogenase complex"/>
    <property type="evidence" value="ECO:0007669"/>
    <property type="project" value="TreeGrafter"/>
</dbReference>
<dbReference type="GO" id="GO:0005886">
    <property type="term" value="C:plasma membrane"/>
    <property type="evidence" value="ECO:0007669"/>
    <property type="project" value="UniProtKB-SubCell"/>
</dbReference>
<dbReference type="GO" id="GO:0008137">
    <property type="term" value="F:NADH dehydrogenase (ubiquinone) activity"/>
    <property type="evidence" value="ECO:0007669"/>
    <property type="project" value="InterPro"/>
</dbReference>
<dbReference type="GO" id="GO:0050136">
    <property type="term" value="F:NADH:ubiquinone reductase (non-electrogenic) activity"/>
    <property type="evidence" value="ECO:0007669"/>
    <property type="project" value="UniProtKB-UniRule"/>
</dbReference>
<dbReference type="GO" id="GO:0048038">
    <property type="term" value="F:quinone binding"/>
    <property type="evidence" value="ECO:0007669"/>
    <property type="project" value="UniProtKB-KW"/>
</dbReference>
<dbReference type="FunFam" id="1.20.58.1610:FF:000004">
    <property type="entry name" value="NADH-quinone oxidoreductase subunit A"/>
    <property type="match status" value="1"/>
</dbReference>
<dbReference type="Gene3D" id="1.20.58.1610">
    <property type="entry name" value="NADH:ubiquinone/plastoquinone oxidoreductase, chain 3"/>
    <property type="match status" value="1"/>
</dbReference>
<dbReference type="HAMAP" id="MF_01394">
    <property type="entry name" value="NDH1_NuoA"/>
    <property type="match status" value="1"/>
</dbReference>
<dbReference type="InterPro" id="IPR023043">
    <property type="entry name" value="NAD(P)H_OxRDtase_bac/plastid"/>
</dbReference>
<dbReference type="InterPro" id="IPR000440">
    <property type="entry name" value="NADH_UbQ/plastoQ_OxRdtase_su3"/>
</dbReference>
<dbReference type="InterPro" id="IPR038430">
    <property type="entry name" value="NDAH_ubi_oxred_su3_sf"/>
</dbReference>
<dbReference type="PANTHER" id="PTHR11058">
    <property type="entry name" value="NADH-UBIQUINONE OXIDOREDUCTASE CHAIN 3"/>
    <property type="match status" value="1"/>
</dbReference>
<dbReference type="PANTHER" id="PTHR11058:SF9">
    <property type="entry name" value="NADH-UBIQUINONE OXIDOREDUCTASE CHAIN 3"/>
    <property type="match status" value="1"/>
</dbReference>
<dbReference type="Pfam" id="PF00507">
    <property type="entry name" value="Oxidored_q4"/>
    <property type="match status" value="1"/>
</dbReference>
<gene>
    <name evidence="1" type="primary">nuoA</name>
    <name type="ordered locus">NSE_0429</name>
</gene>